<organism>
    <name type="scientific">Rhizobium sp. (strain MTP-10005)</name>
    <dbReference type="NCBI Taxonomy" id="267998"/>
    <lineage>
        <taxon>Bacteria</taxon>
        <taxon>Pseudomonadati</taxon>
        <taxon>Pseudomonadota</taxon>
        <taxon>Alphaproteobacteria</taxon>
        <taxon>Hyphomicrobiales</taxon>
        <taxon>Rhizobiaceae</taxon>
        <taxon>Rhizobium/Agrobacterium group</taxon>
        <taxon>Rhizobium</taxon>
    </lineage>
</organism>
<name>GRDC_RHIS5</name>
<accession>Q60GU1</accession>
<protein>
    <recommendedName>
        <fullName evidence="4">Gamma-resorcylate decarboxylase</fullName>
        <shortName evidence="5">GRDC</shortName>
        <shortName evidence="4">Gamma-RDC</shortName>
        <ecNumber evidence="1">4.1.1.103</ecNumber>
    </recommendedName>
    <alternativeName>
        <fullName evidence="5">2,6-dihydroxybenzoate decarboxylase</fullName>
    </alternativeName>
</protein>
<keyword id="KW-0002">3D-structure</keyword>
<keyword id="KW-0210">Decarboxylase</keyword>
<keyword id="KW-0903">Direct protein sequencing</keyword>
<keyword id="KW-0456">Lyase</keyword>
<keyword id="KW-0479">Metal-binding</keyword>
<keyword id="KW-0862">Zinc</keyword>
<sequence>MQGKVALEEHFAIPETLQDSAGFVPGDYWKELQHRLLDIQDTRLKLMDAHGIETMILSLNAPAVQAIPDRRKAIEIARRANDVLAEECAKRPDRFLAFAALPLQDPDAATEELQRCVNDLGFVGALVNGFSQEGDGQTPLYYDLPQYRPFWGEVEKLDVPFYLHPRNPLPQDSRIYDGHPWLLGPTWAFAQETAVHALRLMASGLFDEHPRLNIILGHMGEGLPYMMWRIDHRNAWVKLPPRYPAKRRFMDYFNENFHITTSGNFRTQTLIDAILEIGADRILFSTDWPFENIDHASDWFNATSIAEADRVKIGRTNARRLFKLDGA</sequence>
<reference key="1">
    <citation type="journal article" date="2004" name="J. Bacteriol.">
        <title>Thermophilic, reversible gamma-resorcylate decarboxylase from Rhizobium sp. strain MTP-10005: purification, molecular characterization, and expression.</title>
        <authorList>
            <person name="Yoshiada M."/>
            <person name="Fukuhara N."/>
            <person name="Oikawa T."/>
        </authorList>
    </citation>
    <scope>NUCLEOTIDE SEQUENCE [GENOMIC DNA]</scope>
    <scope>PROTEIN SEQUENCE OF 1-23; 46-60 AND 73-87</scope>
    <scope>FUNCTION</scope>
    <scope>CATALYTIC ACTIVITY</scope>
    <scope>ACTIVITY REGULATION</scope>
    <scope>BIOPHYSICOCHEMICAL PROPERTIES</scope>
    <scope>SUBUNIT</scope>
    <scope>INDUCTION</scope>
    <source>
        <strain>MTP-10005</strain>
    </source>
</reference>
<reference key="2">
    <citation type="journal article" date="2007" name="J. Bacteriol.">
        <title>Biochemical and genetic analysis of the gamma-resorcylate (2,6-dihydroxybenzoate) catabolic pathway in Rhizobium sp. strain MTP-10005: identification and functional analysis of its gene cluster.</title>
        <authorList>
            <person name="Yoshida M."/>
            <person name="Oikawa T."/>
            <person name="Obata H."/>
            <person name="Abe K."/>
            <person name="Mihara H."/>
            <person name="Esaki N."/>
        </authorList>
    </citation>
    <scope>INDUCTION</scope>
    <source>
        <strain>MTP-10005</strain>
    </source>
</reference>
<reference evidence="9 10 11" key="3">
    <citation type="journal article" date="2006" name="J. Biol. Chem.">
        <title>Crystal structures of nonoxidative zinc-dependent 2,6-dihydroxybenzoate (gamma-resorcylate) decarboxylase from Rhizobium sp. strain MTP-10005.</title>
        <authorList>
            <person name="Goto M."/>
            <person name="Hayashi H."/>
            <person name="Miyahara I."/>
            <person name="Hirotsu K."/>
            <person name="Yoshida M."/>
            <person name="Oikawa T."/>
        </authorList>
    </citation>
    <scope>X-RAY CRYSTALLOGRAPHY (1.70 ANGSTROMS) IN COMPLEXES WITH ZINC; 2,6-DIHYDROXYBENZOATE AND 2,3-DIHYDROXYBENZALDEHYDE</scope>
    <scope>COFACTOR</scope>
    <scope>ACTIVITY REGULATION</scope>
    <scope>SUBUNIT</scope>
    <scope>ACTIVE SITE</scope>
</reference>
<comment type="function">
    <text evidence="1">Involved in the gamma-resorcylate (2,6-dihydroxybenzoate) catabolism (PubMed:15466039). Catalyzes the reversible decarboxylation of gamma-resorcylate to resorcinol (PubMed:15466039). The reaction is reversible, but equilibrium greatly favors the decarboxylation reaction (PubMed:15466039). Also catalyzes the decarboxylation of 2,3-dihydroxybenzoate to catechol, but does not act on 2,4-dihydroxybenzoate, 2,5-dihydroxybenzoate, 3,4-dihydroxybenzoate, 3,5-dihydroxybenzoate, 2-hydroxybenzoate, or 3-hydroxybenzoate. Only resorcinol is carboxylated by the reverse reaction (PubMed:15466039).</text>
</comment>
<comment type="catalytic activity">
    <reaction evidence="1">
        <text>2,6-dihydroxybenzoate + H(+) = resorcinol + CO2</text>
        <dbReference type="Rhea" id="RHEA:49464"/>
        <dbReference type="ChEBI" id="CHEBI:15378"/>
        <dbReference type="ChEBI" id="CHEBI:16526"/>
        <dbReference type="ChEBI" id="CHEBI:27810"/>
        <dbReference type="ChEBI" id="CHEBI:131450"/>
        <dbReference type="EC" id="4.1.1.103"/>
    </reaction>
    <physiologicalReaction direction="left-to-right" evidence="1">
        <dbReference type="Rhea" id="RHEA:49465"/>
    </physiologicalReaction>
</comment>
<comment type="catalytic activity">
    <reaction evidence="1">
        <text>2,3-dihydroxybenzoate + H(+) = catechol + CO2</text>
        <dbReference type="Rhea" id="RHEA:21492"/>
        <dbReference type="ChEBI" id="CHEBI:15378"/>
        <dbReference type="ChEBI" id="CHEBI:16526"/>
        <dbReference type="ChEBI" id="CHEBI:18135"/>
        <dbReference type="ChEBI" id="CHEBI:36654"/>
    </reaction>
</comment>
<comment type="cofactor">
    <cofactor evidence="2">
        <name>Zn(2+)</name>
        <dbReference type="ChEBI" id="CHEBI:29105"/>
    </cofactor>
    <text evidence="2">Binds 1 Zn(2+) ion per subunit.</text>
</comment>
<comment type="activity regulation">
    <text evidence="1 2">Inhibited by CuCl(2), monoiodoacetate and diethylpyrocarbonate (PubMed:15466039). Inhibited by 2,3-dihydroxybenzaldehyde, which is an analog of the substrate 2,3-dihydroxybenzoate (PubMed:16963440).</text>
</comment>
<comment type="biophysicochemical properties">
    <kinetics>
        <KM evidence="1">70.7 uM for gamma-resorcylate (for decarboxylation)</KM>
        <KM evidence="1">123 uM for 2,3-dihydroxybenzoate (for decarboxylation)</KM>
        <KM evidence="1">45.7 mM for resorcinol (for carboxylation)</KM>
        <KM evidence="1">22.2 mM for NaHCO(3) (for carboxylation)</KM>
        <Vmax evidence="1">0.377 umol/min/mg enzyme with gamma-resorcylate as substrate (for decarboxylation)</Vmax>
        <Vmax evidence="1">1.06 umol/min/mg enzyme with 2,3-dihydroxybenzoate as substrate (for decarboxylation)</Vmax>
        <Vmax evidence="1">1.78 umol/min/mg enzyme with resorcinol as substrate (for carboxylation)</Vmax>
        <Vmax evidence="1">1.75 umol/min/mg enzyme with NaHCO(3) as substrate (for carboxylation)</Vmax>
    </kinetics>
    <phDependence>
        <text evidence="1">Optimum pH is 8.0 for decarboxylation. Optimum pH is 7.0 for carboxylation.</text>
    </phDependence>
    <temperatureDependence>
        <text evidence="1">Optimum temperature is 70 degrees Celsius.</text>
    </temperatureDependence>
</comment>
<comment type="pathway">
    <text evidence="7">Aromatic compound metabolism.</text>
</comment>
<comment type="subunit">
    <text evidence="1 2">Homotetramer (PubMed:15466039, PubMed:16963440). Dimer of dimers (PubMed:16963440).</text>
</comment>
<comment type="induction">
    <text evidence="1 3">Induced in the presence of gamma-resorcylate.</text>
</comment>
<comment type="similarity">
    <text evidence="7">Belongs to the metallo-dependent hydrolases superfamily. ACMSD family.</text>
</comment>
<proteinExistence type="evidence at protein level"/>
<dbReference type="EC" id="4.1.1.103" evidence="1"/>
<dbReference type="EMBL" id="AB170010">
    <property type="protein sequence ID" value="BAD54753.1"/>
    <property type="molecule type" value="Genomic_DNA"/>
</dbReference>
<dbReference type="PDB" id="2DVT">
    <property type="method" value="X-ray"/>
    <property type="resolution" value="1.70 A"/>
    <property type="chains" value="A/B/C/D=1-327"/>
</dbReference>
<dbReference type="PDB" id="2DVU">
    <property type="method" value="X-ray"/>
    <property type="resolution" value="1.90 A"/>
    <property type="chains" value="A/B/C/D=1-327"/>
</dbReference>
<dbReference type="PDB" id="2DVX">
    <property type="method" value="X-ray"/>
    <property type="resolution" value="1.70 A"/>
    <property type="chains" value="A/B/C/D=1-327"/>
</dbReference>
<dbReference type="PDBsum" id="2DVT"/>
<dbReference type="PDBsum" id="2DVU"/>
<dbReference type="PDBsum" id="2DVX"/>
<dbReference type="SMR" id="Q60GU1"/>
<dbReference type="KEGG" id="ag:BAD54753"/>
<dbReference type="BioCyc" id="MetaCyc:MONOMER-19787"/>
<dbReference type="BRENDA" id="4.1.1.103">
    <property type="organism ID" value="5351"/>
</dbReference>
<dbReference type="EvolutionaryTrace" id="Q60GU1"/>
<dbReference type="GO" id="GO:0005829">
    <property type="term" value="C:cytosol"/>
    <property type="evidence" value="ECO:0007669"/>
    <property type="project" value="TreeGrafter"/>
</dbReference>
<dbReference type="GO" id="GO:0016831">
    <property type="term" value="F:carboxy-lyase activity"/>
    <property type="evidence" value="ECO:0007669"/>
    <property type="project" value="UniProtKB-KW"/>
</dbReference>
<dbReference type="GO" id="GO:0016787">
    <property type="term" value="F:hydrolase activity"/>
    <property type="evidence" value="ECO:0007669"/>
    <property type="project" value="InterPro"/>
</dbReference>
<dbReference type="GO" id="GO:0046872">
    <property type="term" value="F:metal ion binding"/>
    <property type="evidence" value="ECO:0007669"/>
    <property type="project" value="UniProtKB-KW"/>
</dbReference>
<dbReference type="GO" id="GO:0019748">
    <property type="term" value="P:secondary metabolic process"/>
    <property type="evidence" value="ECO:0007669"/>
    <property type="project" value="TreeGrafter"/>
</dbReference>
<dbReference type="Gene3D" id="3.20.20.140">
    <property type="entry name" value="Metal-dependent hydrolases"/>
    <property type="match status" value="1"/>
</dbReference>
<dbReference type="InterPro" id="IPR032465">
    <property type="entry name" value="ACMSD"/>
</dbReference>
<dbReference type="InterPro" id="IPR006680">
    <property type="entry name" value="Amidohydro-rel"/>
</dbReference>
<dbReference type="InterPro" id="IPR032466">
    <property type="entry name" value="Metal_Hydrolase"/>
</dbReference>
<dbReference type="PANTHER" id="PTHR21240">
    <property type="entry name" value="2-AMINO-3-CARBOXYLMUCONATE-6-SEMIALDEHYDE DECARBOXYLASE"/>
    <property type="match status" value="1"/>
</dbReference>
<dbReference type="PANTHER" id="PTHR21240:SF31">
    <property type="entry name" value="AMIDOHYDROLASE FAMILY PROTEIN (AFU_ORTHOLOGUE AFUA_7G05840)"/>
    <property type="match status" value="1"/>
</dbReference>
<dbReference type="Pfam" id="PF04909">
    <property type="entry name" value="Amidohydro_2"/>
    <property type="match status" value="1"/>
</dbReference>
<dbReference type="SUPFAM" id="SSF51556">
    <property type="entry name" value="Metallo-dependent hydrolases"/>
    <property type="match status" value="1"/>
</dbReference>
<gene>
    <name evidence="6" type="primary">graF</name>
</gene>
<evidence type="ECO:0000269" key="1">
    <source>
    </source>
</evidence>
<evidence type="ECO:0000269" key="2">
    <source>
    </source>
</evidence>
<evidence type="ECO:0000269" key="3">
    <source>
    </source>
</evidence>
<evidence type="ECO:0000303" key="4">
    <source>
    </source>
</evidence>
<evidence type="ECO:0000303" key="5">
    <source>
    </source>
</evidence>
<evidence type="ECO:0000303" key="6">
    <source>
    </source>
</evidence>
<evidence type="ECO:0000305" key="7"/>
<evidence type="ECO:0000305" key="8">
    <source>
    </source>
</evidence>
<evidence type="ECO:0007744" key="9">
    <source>
        <dbReference type="PDB" id="2DVT"/>
    </source>
</evidence>
<evidence type="ECO:0007744" key="10">
    <source>
        <dbReference type="PDB" id="2DVU"/>
    </source>
</evidence>
<evidence type="ECO:0007744" key="11">
    <source>
        <dbReference type="PDB" id="2DVX"/>
    </source>
</evidence>
<evidence type="ECO:0007829" key="12">
    <source>
        <dbReference type="PDB" id="2DVT"/>
    </source>
</evidence>
<feature type="chain" id="PRO_0000454504" description="Gamma-resorcylate decarboxylase">
    <location>
        <begin position="1"/>
        <end position="327"/>
    </location>
</feature>
<feature type="active site" evidence="8">
    <location>
        <position position="287"/>
    </location>
</feature>
<feature type="binding site" evidence="2 9 10 11">
    <location>
        <position position="8"/>
    </location>
    <ligand>
        <name>Zn(2+)</name>
        <dbReference type="ChEBI" id="CHEBI:29105"/>
    </ligand>
</feature>
<feature type="binding site" evidence="2 9 10 11">
    <location>
        <position position="10"/>
    </location>
    <ligand>
        <name>Zn(2+)</name>
        <dbReference type="ChEBI" id="CHEBI:29105"/>
    </ligand>
</feature>
<feature type="binding site" evidence="2 10">
    <location>
        <position position="23"/>
    </location>
    <ligand>
        <name>2,6-dihydroxybenzoate</name>
        <dbReference type="ChEBI" id="CHEBI:131450"/>
    </ligand>
</feature>
<feature type="binding site" evidence="2 10">
    <location>
        <position position="164"/>
    </location>
    <ligand>
        <name>2,6-dihydroxybenzoate</name>
        <dbReference type="ChEBI" id="CHEBI:131450"/>
    </ligand>
</feature>
<feature type="binding site" evidence="2 9 10 11">
    <location>
        <position position="164"/>
    </location>
    <ligand>
        <name>Zn(2+)</name>
        <dbReference type="ChEBI" id="CHEBI:29105"/>
    </ligand>
</feature>
<feature type="binding site" evidence="2 10">
    <location>
        <position position="287"/>
    </location>
    <ligand>
        <name>2,6-dihydroxybenzoate</name>
        <dbReference type="ChEBI" id="CHEBI:131450"/>
    </ligand>
</feature>
<feature type="binding site" evidence="2 9 10 11">
    <location>
        <position position="287"/>
    </location>
    <ligand>
        <name>Zn(2+)</name>
        <dbReference type="ChEBI" id="CHEBI:29105"/>
    </ligand>
</feature>
<feature type="strand" evidence="12">
    <location>
        <begin position="3"/>
        <end position="11"/>
    </location>
</feature>
<feature type="helix" evidence="12">
    <location>
        <begin position="14"/>
        <end position="17"/>
    </location>
</feature>
<feature type="helix" evidence="12">
    <location>
        <begin position="18"/>
        <end position="20"/>
    </location>
</feature>
<feature type="helix" evidence="12">
    <location>
        <begin position="28"/>
        <end position="37"/>
    </location>
</feature>
<feature type="strand" evidence="12">
    <location>
        <begin position="39"/>
        <end position="41"/>
    </location>
</feature>
<feature type="helix" evidence="12">
    <location>
        <begin position="42"/>
        <end position="49"/>
    </location>
</feature>
<feature type="strand" evidence="12">
    <location>
        <begin position="52"/>
        <end position="59"/>
    </location>
</feature>
<feature type="helix" evidence="12">
    <location>
        <begin position="63"/>
        <end position="66"/>
    </location>
</feature>
<feature type="helix" evidence="12">
    <location>
        <begin position="70"/>
        <end position="90"/>
    </location>
</feature>
<feature type="turn" evidence="12">
    <location>
        <begin position="92"/>
        <end position="94"/>
    </location>
</feature>
<feature type="strand" evidence="12">
    <location>
        <begin position="95"/>
        <end position="99"/>
    </location>
</feature>
<feature type="helix" evidence="12">
    <location>
        <begin position="106"/>
        <end position="118"/>
    </location>
</feature>
<feature type="strand" evidence="12">
    <location>
        <begin position="124"/>
        <end position="131"/>
    </location>
</feature>
<feature type="helix" evidence="12">
    <location>
        <begin position="145"/>
        <end position="147"/>
    </location>
</feature>
<feature type="helix" evidence="12">
    <location>
        <begin position="148"/>
        <end position="157"/>
    </location>
</feature>
<feature type="strand" evidence="12">
    <location>
        <begin position="161"/>
        <end position="164"/>
    </location>
</feature>
<feature type="helix" evidence="12">
    <location>
        <begin position="170"/>
        <end position="172"/>
    </location>
</feature>
<feature type="helix" evidence="12">
    <location>
        <begin position="174"/>
        <end position="176"/>
    </location>
</feature>
<feature type="helix" evidence="12">
    <location>
        <begin position="180"/>
        <end position="182"/>
    </location>
</feature>
<feature type="helix" evidence="12">
    <location>
        <begin position="184"/>
        <end position="186"/>
    </location>
</feature>
<feature type="helix" evidence="12">
    <location>
        <begin position="188"/>
        <end position="202"/>
    </location>
</feature>
<feature type="helix" evidence="12">
    <location>
        <begin position="205"/>
        <end position="208"/>
    </location>
</feature>
<feature type="strand" evidence="12">
    <location>
        <begin position="214"/>
        <end position="217"/>
    </location>
</feature>
<feature type="helix" evidence="12">
    <location>
        <begin position="218"/>
        <end position="220"/>
    </location>
</feature>
<feature type="helix" evidence="12">
    <location>
        <begin position="223"/>
        <end position="232"/>
    </location>
</feature>
<feature type="turn" evidence="12">
    <location>
        <begin position="233"/>
        <end position="236"/>
    </location>
</feature>
<feature type="strand" evidence="12">
    <location>
        <begin position="242"/>
        <end position="244"/>
    </location>
</feature>
<feature type="helix" evidence="12">
    <location>
        <begin position="249"/>
        <end position="256"/>
    </location>
</feature>
<feature type="strand" evidence="12">
    <location>
        <begin position="257"/>
        <end position="260"/>
    </location>
</feature>
<feature type="helix" evidence="12">
    <location>
        <begin position="267"/>
        <end position="274"/>
    </location>
</feature>
<feature type="turn" evidence="12">
    <location>
        <begin position="275"/>
        <end position="277"/>
    </location>
</feature>
<feature type="helix" evidence="12">
    <location>
        <begin position="279"/>
        <end position="281"/>
    </location>
</feature>
<feature type="turn" evidence="12">
    <location>
        <begin position="288"/>
        <end position="290"/>
    </location>
</feature>
<feature type="helix" evidence="12">
    <location>
        <begin position="293"/>
        <end position="302"/>
    </location>
</feature>
<feature type="strand" evidence="12">
    <location>
        <begin position="303"/>
        <end position="305"/>
    </location>
</feature>
<feature type="helix" evidence="12">
    <location>
        <begin position="307"/>
        <end position="314"/>
    </location>
</feature>
<feature type="helix" evidence="12">
    <location>
        <begin position="316"/>
        <end position="321"/>
    </location>
</feature>